<organism>
    <name type="scientific">Bacillus licheniformis (strain ATCC 14580 / DSM 13 / JCM 2505 / CCUG 7422 / NBRC 12200 / NCIMB 9375 / NCTC 10341 / NRRL NRS-1264 / Gibson 46)</name>
    <dbReference type="NCBI Taxonomy" id="279010"/>
    <lineage>
        <taxon>Bacteria</taxon>
        <taxon>Bacillati</taxon>
        <taxon>Bacillota</taxon>
        <taxon>Bacilli</taxon>
        <taxon>Bacillales</taxon>
        <taxon>Bacillaceae</taxon>
        <taxon>Bacillus</taxon>
    </lineage>
</organism>
<proteinExistence type="inferred from homology"/>
<protein>
    <recommendedName>
        <fullName evidence="1">Peptide methionine sulfoxide reductase MsrB</fullName>
        <ecNumber evidence="1">1.8.4.12</ecNumber>
    </recommendedName>
    <alternativeName>
        <fullName evidence="1">Peptide-methionine (R)-S-oxide reductase</fullName>
    </alternativeName>
</protein>
<keyword id="KW-0560">Oxidoreductase</keyword>
<keyword id="KW-1185">Reference proteome</keyword>
<sequence length="151" mass="17215">MTNNKEERLKQLTRMQYEVTQKNGTEPPFQNEYWDLHEDGIYVDIVSGKPLFSSLDKFDAHCGWPSFTKPVDAGEIEEKLDTSHGMIRTEVRSKSADSHLGHVFPDGPGPDGLRYCINSAALRFVPKDDLEKEGYGEYVKLFERKKSGEES</sequence>
<reference key="1">
    <citation type="journal article" date="2004" name="J. Mol. Microbiol. Biotechnol.">
        <title>The complete genome sequence of Bacillus licheniformis DSM13, an organism with great industrial potential.</title>
        <authorList>
            <person name="Veith B."/>
            <person name="Herzberg C."/>
            <person name="Steckel S."/>
            <person name="Feesche J."/>
            <person name="Maurer K.H."/>
            <person name="Ehrenreich P."/>
            <person name="Baeumer S."/>
            <person name="Henne A."/>
            <person name="Liesegang H."/>
            <person name="Merkl R."/>
            <person name="Ehrenreich A."/>
            <person name="Gottschalk G."/>
        </authorList>
    </citation>
    <scope>NUCLEOTIDE SEQUENCE [LARGE SCALE GENOMIC DNA]</scope>
    <source>
        <strain>ATCC 14580 / DSM 13 / JCM 2505 / CCUG 7422 / NBRC 12200 / NCIMB 9375 / NCTC 10341 / NRRL NRS-1264 / Gibson 46</strain>
    </source>
</reference>
<reference key="2">
    <citation type="journal article" date="2004" name="Genome Biol.">
        <title>Complete genome sequence of the industrial bacterium Bacillus licheniformis and comparisons with closely related Bacillus species.</title>
        <authorList>
            <person name="Rey M.W."/>
            <person name="Ramaiya P."/>
            <person name="Nelson B.A."/>
            <person name="Brody-Karpin S.D."/>
            <person name="Zaretsky E.J."/>
            <person name="Tang M."/>
            <person name="Lopez de Leon A."/>
            <person name="Xiang H."/>
            <person name="Gusti V."/>
            <person name="Clausen I.G."/>
            <person name="Olsen P.B."/>
            <person name="Rasmussen M.D."/>
            <person name="Andersen J.T."/>
            <person name="Joergensen P.L."/>
            <person name="Larsen T.S."/>
            <person name="Sorokin A."/>
            <person name="Bolotin A."/>
            <person name="Lapidus A."/>
            <person name="Galleron N."/>
            <person name="Ehrlich S.D."/>
            <person name="Berka R.M."/>
        </authorList>
    </citation>
    <scope>NUCLEOTIDE SEQUENCE [LARGE SCALE GENOMIC DNA]</scope>
    <source>
        <strain>ATCC 14580 / DSM 13 / JCM 2505 / CCUG 7422 / NBRC 12200 / NCIMB 9375 / NCTC 10341 / NRRL NRS-1264 / Gibson 46</strain>
    </source>
</reference>
<dbReference type="EC" id="1.8.4.12" evidence="1"/>
<dbReference type="EMBL" id="CP000002">
    <property type="protein sequence ID" value="AAU23826.1"/>
    <property type="molecule type" value="Genomic_DNA"/>
</dbReference>
<dbReference type="EMBL" id="AE017333">
    <property type="protein sequence ID" value="AAU41182.1"/>
    <property type="molecule type" value="Genomic_DNA"/>
</dbReference>
<dbReference type="RefSeq" id="WP_003182780.1">
    <property type="nucleotide sequence ID" value="NC_006322.1"/>
</dbReference>
<dbReference type="SMR" id="Q65ID2"/>
<dbReference type="STRING" id="279010.BL01422"/>
<dbReference type="GeneID" id="92861102"/>
<dbReference type="KEGG" id="bld:BLi02302"/>
<dbReference type="KEGG" id="bli:BL01422"/>
<dbReference type="eggNOG" id="COG0229">
    <property type="taxonomic scope" value="Bacteria"/>
</dbReference>
<dbReference type="HOGENOM" id="CLU_031040_8_5_9"/>
<dbReference type="Proteomes" id="UP000000606">
    <property type="component" value="Chromosome"/>
</dbReference>
<dbReference type="Bgee" id="BL01422">
    <property type="expression patterns" value="Expressed in egg cell and 12 other cell types or tissues"/>
</dbReference>
<dbReference type="GO" id="GO:0005737">
    <property type="term" value="C:cytoplasm"/>
    <property type="evidence" value="ECO:0007669"/>
    <property type="project" value="TreeGrafter"/>
</dbReference>
<dbReference type="GO" id="GO:0033743">
    <property type="term" value="F:peptide-methionine (R)-S-oxide reductase activity"/>
    <property type="evidence" value="ECO:0007669"/>
    <property type="project" value="UniProtKB-UniRule"/>
</dbReference>
<dbReference type="GO" id="GO:0030091">
    <property type="term" value="P:protein repair"/>
    <property type="evidence" value="ECO:0007669"/>
    <property type="project" value="InterPro"/>
</dbReference>
<dbReference type="GO" id="GO:0006979">
    <property type="term" value="P:response to oxidative stress"/>
    <property type="evidence" value="ECO:0007669"/>
    <property type="project" value="InterPro"/>
</dbReference>
<dbReference type="FunFam" id="2.170.150.20:FF:000003">
    <property type="entry name" value="Peptide methionine sulfoxide reductase MsrB"/>
    <property type="match status" value="1"/>
</dbReference>
<dbReference type="Gene3D" id="2.170.150.20">
    <property type="entry name" value="Peptide methionine sulfoxide reductase"/>
    <property type="match status" value="1"/>
</dbReference>
<dbReference type="HAMAP" id="MF_01400">
    <property type="entry name" value="MsrB"/>
    <property type="match status" value="1"/>
</dbReference>
<dbReference type="InterPro" id="IPR028427">
    <property type="entry name" value="Met_Sox_Rdtase_MsrB"/>
</dbReference>
<dbReference type="InterPro" id="IPR002579">
    <property type="entry name" value="Met_Sox_Rdtase_MsrB_dom"/>
</dbReference>
<dbReference type="InterPro" id="IPR011057">
    <property type="entry name" value="Mss4-like_sf"/>
</dbReference>
<dbReference type="NCBIfam" id="TIGR00357">
    <property type="entry name" value="peptide-methionine (R)-S-oxide reductase MsrB"/>
    <property type="match status" value="1"/>
</dbReference>
<dbReference type="PANTHER" id="PTHR10173">
    <property type="entry name" value="METHIONINE SULFOXIDE REDUCTASE"/>
    <property type="match status" value="1"/>
</dbReference>
<dbReference type="PANTHER" id="PTHR10173:SF59">
    <property type="entry name" value="PEPTIDE METHIONINE SULFOXIDE REDUCTASE MSRA_MSRB"/>
    <property type="match status" value="1"/>
</dbReference>
<dbReference type="Pfam" id="PF01641">
    <property type="entry name" value="SelR"/>
    <property type="match status" value="1"/>
</dbReference>
<dbReference type="SUPFAM" id="SSF51316">
    <property type="entry name" value="Mss4-like"/>
    <property type="match status" value="1"/>
</dbReference>
<dbReference type="PROSITE" id="PS51790">
    <property type="entry name" value="MSRB"/>
    <property type="match status" value="1"/>
</dbReference>
<name>MSRB_BACLD</name>
<accession>Q65ID2</accession>
<accession>Q62TT3</accession>
<evidence type="ECO:0000255" key="1">
    <source>
        <dbReference type="HAMAP-Rule" id="MF_01400"/>
    </source>
</evidence>
<evidence type="ECO:0000255" key="2">
    <source>
        <dbReference type="PROSITE-ProRule" id="PRU01126"/>
    </source>
</evidence>
<feature type="chain" id="PRO_1000068264" description="Peptide methionine sulfoxide reductase MsrB">
    <location>
        <begin position="1"/>
        <end position="151"/>
    </location>
</feature>
<feature type="domain" description="MsrB" evidence="2">
    <location>
        <begin position="5"/>
        <end position="127"/>
    </location>
</feature>
<feature type="active site" description="Nucleophile" evidence="2">
    <location>
        <position position="116"/>
    </location>
</feature>
<gene>
    <name evidence="1" type="primary">msrB</name>
    <name type="ordered locus">BLi02302</name>
    <name type="ordered locus">BL01422</name>
</gene>
<comment type="catalytic activity">
    <reaction evidence="1">
        <text>L-methionyl-[protein] + [thioredoxin]-disulfide + H2O = L-methionyl-(R)-S-oxide-[protein] + [thioredoxin]-dithiol</text>
        <dbReference type="Rhea" id="RHEA:24164"/>
        <dbReference type="Rhea" id="RHEA-COMP:10698"/>
        <dbReference type="Rhea" id="RHEA-COMP:10700"/>
        <dbReference type="Rhea" id="RHEA-COMP:12313"/>
        <dbReference type="Rhea" id="RHEA-COMP:12314"/>
        <dbReference type="ChEBI" id="CHEBI:15377"/>
        <dbReference type="ChEBI" id="CHEBI:16044"/>
        <dbReference type="ChEBI" id="CHEBI:29950"/>
        <dbReference type="ChEBI" id="CHEBI:45764"/>
        <dbReference type="ChEBI" id="CHEBI:50058"/>
        <dbReference type="EC" id="1.8.4.12"/>
    </reaction>
</comment>
<comment type="similarity">
    <text evidence="1">Belongs to the MsrB Met sulfoxide reductase family.</text>
</comment>